<protein>
    <recommendedName>
        <fullName evidence="1">Large ribosomal subunit protein bL25</fullName>
    </recommendedName>
    <alternativeName>
        <fullName evidence="3">50S ribosomal protein L25</fullName>
    </alternativeName>
    <alternativeName>
        <fullName evidence="1">General stress protein CTC</fullName>
    </alternativeName>
</protein>
<evidence type="ECO:0000255" key="1">
    <source>
        <dbReference type="HAMAP-Rule" id="MF_01334"/>
    </source>
</evidence>
<evidence type="ECO:0000256" key="2">
    <source>
        <dbReference type="SAM" id="MobiDB-lite"/>
    </source>
</evidence>
<evidence type="ECO:0000305" key="3"/>
<organism>
    <name type="scientific">Syntrophus aciditrophicus (strain SB)</name>
    <dbReference type="NCBI Taxonomy" id="56780"/>
    <lineage>
        <taxon>Bacteria</taxon>
        <taxon>Pseudomonadati</taxon>
        <taxon>Thermodesulfobacteriota</taxon>
        <taxon>Syntrophia</taxon>
        <taxon>Syntrophales</taxon>
        <taxon>Syntrophaceae</taxon>
        <taxon>Syntrophus</taxon>
    </lineage>
</organism>
<gene>
    <name evidence="1" type="primary">rplY</name>
    <name evidence="1" type="synonym">ctc</name>
    <name type="ordered locus">SYNAS_18860</name>
    <name type="ORF">SYN_02768</name>
</gene>
<sequence>MEARELKANVRKESGKEQARRMRREGLIPAVLYGPGTDPVSLSVNASDLKTALKGAEENVLIKLIIDDSGRLMEKNSLIRELQIEPLTNNFFHADFYALRMDQESTFDVPIHFEGQPVGIEKGGELQYLKREIKVSCLPSELPDCITVDISRLDVGDAVLIGDLSLSESIRCFDSKDIVLVTIAALHGVNKAEETEEASS</sequence>
<proteinExistence type="inferred from homology"/>
<comment type="function">
    <text evidence="1">This is one of the proteins that binds to the 5S RNA in the ribosome where it forms part of the central protuberance.</text>
</comment>
<comment type="subunit">
    <text evidence="1">Part of the 50S ribosomal subunit; part of the 5S rRNA/L5/L18/L25 subcomplex. Contacts the 5S rRNA. Binds to the 5S rRNA independently of L5 and L18.</text>
</comment>
<comment type="similarity">
    <text evidence="1">Belongs to the bacterial ribosomal protein bL25 family. CTC subfamily.</text>
</comment>
<reference key="1">
    <citation type="journal article" date="2007" name="Proc. Natl. Acad. Sci. U.S.A.">
        <title>The genome of Syntrophus aciditrophicus: life at the thermodynamic limit of microbial growth.</title>
        <authorList>
            <person name="McInerney M.J."/>
            <person name="Rohlin L."/>
            <person name="Mouttaki H."/>
            <person name="Kim U."/>
            <person name="Krupp R.S."/>
            <person name="Rios-Hernandez L."/>
            <person name="Sieber J."/>
            <person name="Struchtemeyer C.G."/>
            <person name="Bhattacharyya A."/>
            <person name="Campbell J.W."/>
            <person name="Gunsalus R.P."/>
        </authorList>
    </citation>
    <scope>NUCLEOTIDE SEQUENCE [LARGE SCALE GENOMIC DNA]</scope>
    <source>
        <strain>SB</strain>
    </source>
</reference>
<name>RL25_SYNAS</name>
<feature type="chain" id="PRO_0000244245" description="Large ribosomal subunit protein bL25">
    <location>
        <begin position="1"/>
        <end position="200"/>
    </location>
</feature>
<feature type="region of interest" description="Disordered" evidence="2">
    <location>
        <begin position="1"/>
        <end position="20"/>
    </location>
</feature>
<dbReference type="EMBL" id="CP000252">
    <property type="protein sequence ID" value="ABC77765.1"/>
    <property type="molecule type" value="Genomic_DNA"/>
</dbReference>
<dbReference type="RefSeq" id="WP_011417787.1">
    <property type="nucleotide sequence ID" value="NC_007759.1"/>
</dbReference>
<dbReference type="SMR" id="Q2LUK6"/>
<dbReference type="STRING" id="56780.SYN_02768"/>
<dbReference type="KEGG" id="sat:SYN_02768"/>
<dbReference type="eggNOG" id="COG1825">
    <property type="taxonomic scope" value="Bacteria"/>
</dbReference>
<dbReference type="HOGENOM" id="CLU_075939_2_1_7"/>
<dbReference type="InParanoid" id="Q2LUK6"/>
<dbReference type="OrthoDB" id="9786489at2"/>
<dbReference type="Proteomes" id="UP000001933">
    <property type="component" value="Chromosome"/>
</dbReference>
<dbReference type="GO" id="GO:0022625">
    <property type="term" value="C:cytosolic large ribosomal subunit"/>
    <property type="evidence" value="ECO:0007669"/>
    <property type="project" value="TreeGrafter"/>
</dbReference>
<dbReference type="GO" id="GO:0008097">
    <property type="term" value="F:5S rRNA binding"/>
    <property type="evidence" value="ECO:0007669"/>
    <property type="project" value="InterPro"/>
</dbReference>
<dbReference type="GO" id="GO:0003735">
    <property type="term" value="F:structural constituent of ribosome"/>
    <property type="evidence" value="ECO:0007669"/>
    <property type="project" value="InterPro"/>
</dbReference>
<dbReference type="GO" id="GO:0006412">
    <property type="term" value="P:translation"/>
    <property type="evidence" value="ECO:0007669"/>
    <property type="project" value="UniProtKB-UniRule"/>
</dbReference>
<dbReference type="CDD" id="cd00495">
    <property type="entry name" value="Ribosomal_L25_TL5_CTC"/>
    <property type="match status" value="1"/>
</dbReference>
<dbReference type="Gene3D" id="2.170.120.20">
    <property type="entry name" value="Ribosomal protein L25, beta domain"/>
    <property type="match status" value="1"/>
</dbReference>
<dbReference type="Gene3D" id="2.40.240.10">
    <property type="entry name" value="Ribosomal Protein L25, Chain P"/>
    <property type="match status" value="1"/>
</dbReference>
<dbReference type="HAMAP" id="MF_01334">
    <property type="entry name" value="Ribosomal_bL25_CTC"/>
    <property type="match status" value="1"/>
</dbReference>
<dbReference type="InterPro" id="IPR020056">
    <property type="entry name" value="Rbsml_bL25/Gln-tRNA_synth_N"/>
</dbReference>
<dbReference type="InterPro" id="IPR011035">
    <property type="entry name" value="Ribosomal_bL25/Gln-tRNA_synth"/>
</dbReference>
<dbReference type="InterPro" id="IPR020057">
    <property type="entry name" value="Ribosomal_bL25_b-dom"/>
</dbReference>
<dbReference type="InterPro" id="IPR037121">
    <property type="entry name" value="Ribosomal_bL25_C"/>
</dbReference>
<dbReference type="InterPro" id="IPR001021">
    <property type="entry name" value="Ribosomal_bL25_long"/>
</dbReference>
<dbReference type="InterPro" id="IPR029751">
    <property type="entry name" value="Ribosomal_L25_dom"/>
</dbReference>
<dbReference type="InterPro" id="IPR020930">
    <property type="entry name" value="Ribosomal_uL5_bac-type"/>
</dbReference>
<dbReference type="NCBIfam" id="TIGR00731">
    <property type="entry name" value="bL25_bact_ctc"/>
    <property type="match status" value="1"/>
</dbReference>
<dbReference type="NCBIfam" id="NF004139">
    <property type="entry name" value="PRK05618.4-2"/>
    <property type="match status" value="1"/>
</dbReference>
<dbReference type="PANTHER" id="PTHR33284">
    <property type="entry name" value="RIBOSOMAL PROTEIN L25/GLN-TRNA SYNTHETASE, ANTI-CODON-BINDING DOMAIN-CONTAINING PROTEIN"/>
    <property type="match status" value="1"/>
</dbReference>
<dbReference type="PANTHER" id="PTHR33284:SF1">
    <property type="entry name" value="RIBOSOMAL PROTEIN L25_GLN-TRNA SYNTHETASE, ANTI-CODON-BINDING DOMAIN-CONTAINING PROTEIN"/>
    <property type="match status" value="1"/>
</dbReference>
<dbReference type="Pfam" id="PF01386">
    <property type="entry name" value="Ribosomal_L25p"/>
    <property type="match status" value="1"/>
</dbReference>
<dbReference type="Pfam" id="PF14693">
    <property type="entry name" value="Ribosomal_TL5_C"/>
    <property type="match status" value="1"/>
</dbReference>
<dbReference type="SUPFAM" id="SSF50715">
    <property type="entry name" value="Ribosomal protein L25-like"/>
    <property type="match status" value="1"/>
</dbReference>
<keyword id="KW-1185">Reference proteome</keyword>
<keyword id="KW-0687">Ribonucleoprotein</keyword>
<keyword id="KW-0689">Ribosomal protein</keyword>
<keyword id="KW-0694">RNA-binding</keyword>
<keyword id="KW-0699">rRNA-binding</keyword>
<accession>Q2LUK6</accession>